<protein>
    <recommendedName>
        <fullName evidence="1">Hemin import ATP-binding protein HmuV</fullName>
        <ecNumber evidence="1">7.6.2.-</ecNumber>
    </recommendedName>
</protein>
<name>HMUV_ALIF1</name>
<gene>
    <name evidence="1" type="primary">hmuV</name>
    <name type="ordered locus">VF_1220</name>
</gene>
<proteinExistence type="inferred from homology"/>
<feature type="chain" id="PRO_0000269636" description="Hemin import ATP-binding protein HmuV">
    <location>
        <begin position="1"/>
        <end position="259"/>
    </location>
</feature>
<feature type="domain" description="ABC transporter" evidence="1">
    <location>
        <begin position="8"/>
        <end position="242"/>
    </location>
</feature>
<feature type="binding site" evidence="1">
    <location>
        <begin position="40"/>
        <end position="47"/>
    </location>
    <ligand>
        <name>ATP</name>
        <dbReference type="ChEBI" id="CHEBI:30616"/>
    </ligand>
</feature>
<accession>Q5E5I1</accession>
<keyword id="KW-0067">ATP-binding</keyword>
<keyword id="KW-0997">Cell inner membrane</keyword>
<keyword id="KW-1003">Cell membrane</keyword>
<keyword id="KW-0472">Membrane</keyword>
<keyword id="KW-0547">Nucleotide-binding</keyword>
<keyword id="KW-1185">Reference proteome</keyword>
<keyword id="KW-1278">Translocase</keyword>
<keyword id="KW-0813">Transport</keyword>
<reference key="1">
    <citation type="journal article" date="2005" name="Proc. Natl. Acad. Sci. U.S.A.">
        <title>Complete genome sequence of Vibrio fischeri: a symbiotic bacterium with pathogenic congeners.</title>
        <authorList>
            <person name="Ruby E.G."/>
            <person name="Urbanowski M."/>
            <person name="Campbell J."/>
            <person name="Dunn A."/>
            <person name="Faini M."/>
            <person name="Gunsalus R."/>
            <person name="Lostroh P."/>
            <person name="Lupp C."/>
            <person name="McCann J."/>
            <person name="Millikan D."/>
            <person name="Schaefer A."/>
            <person name="Stabb E."/>
            <person name="Stevens A."/>
            <person name="Visick K."/>
            <person name="Whistler C."/>
            <person name="Greenberg E.P."/>
        </authorList>
    </citation>
    <scope>NUCLEOTIDE SEQUENCE [LARGE SCALE GENOMIC DNA]</scope>
    <source>
        <strain>ATCC 700601 / ES114</strain>
    </source>
</reference>
<sequence>MSLSSLAISANNISYRIGSKIILDDINLELRCGEVTTLLGPNGAGKSTLLKLLCDEITSFNDIRYFGKAKDQWDGNELAKRLGVLPQHSTLSFAFNVNEVVELGGLPLSLSNQALREITSNMMQKTVIKHLAERAYPSLSGGEKQRVHLARVLTQVSQHQQKIVMLDEPTSALDLSHQHNTLKLARELASEGAAVIVVLHDLNLAAQYSDRVIVLQDGKLQADGAPWEAITSKMIENVYGHKTLVQAHPTLNFPVVFAA</sequence>
<organism>
    <name type="scientific">Aliivibrio fischeri (strain ATCC 700601 / ES114)</name>
    <name type="common">Vibrio fischeri</name>
    <dbReference type="NCBI Taxonomy" id="312309"/>
    <lineage>
        <taxon>Bacteria</taxon>
        <taxon>Pseudomonadati</taxon>
        <taxon>Pseudomonadota</taxon>
        <taxon>Gammaproteobacteria</taxon>
        <taxon>Vibrionales</taxon>
        <taxon>Vibrionaceae</taxon>
        <taxon>Aliivibrio</taxon>
    </lineage>
</organism>
<evidence type="ECO:0000255" key="1">
    <source>
        <dbReference type="HAMAP-Rule" id="MF_01718"/>
    </source>
</evidence>
<dbReference type="EC" id="7.6.2.-" evidence="1"/>
<dbReference type="EMBL" id="CP000020">
    <property type="protein sequence ID" value="AAW85715.1"/>
    <property type="molecule type" value="Genomic_DNA"/>
</dbReference>
<dbReference type="RefSeq" id="WP_011261836.1">
    <property type="nucleotide sequence ID" value="NC_006840.2"/>
</dbReference>
<dbReference type="RefSeq" id="YP_204603.1">
    <property type="nucleotide sequence ID" value="NC_006840.2"/>
</dbReference>
<dbReference type="SMR" id="Q5E5I1"/>
<dbReference type="STRING" id="312309.VF_1220"/>
<dbReference type="EnsemblBacteria" id="AAW85715">
    <property type="protein sequence ID" value="AAW85715"/>
    <property type="gene ID" value="VF_1220"/>
</dbReference>
<dbReference type="GeneID" id="54163891"/>
<dbReference type="KEGG" id="vfi:VF_1220"/>
<dbReference type="PATRIC" id="fig|312309.11.peg.1227"/>
<dbReference type="eggNOG" id="COG4559">
    <property type="taxonomic scope" value="Bacteria"/>
</dbReference>
<dbReference type="HOGENOM" id="CLU_000604_1_11_6"/>
<dbReference type="OrthoDB" id="5292475at2"/>
<dbReference type="Proteomes" id="UP000000537">
    <property type="component" value="Chromosome I"/>
</dbReference>
<dbReference type="GO" id="GO:0005886">
    <property type="term" value="C:plasma membrane"/>
    <property type="evidence" value="ECO:0007669"/>
    <property type="project" value="UniProtKB-SubCell"/>
</dbReference>
<dbReference type="GO" id="GO:0005524">
    <property type="term" value="F:ATP binding"/>
    <property type="evidence" value="ECO:0007669"/>
    <property type="project" value="UniProtKB-KW"/>
</dbReference>
<dbReference type="GO" id="GO:0016887">
    <property type="term" value="F:ATP hydrolysis activity"/>
    <property type="evidence" value="ECO:0007669"/>
    <property type="project" value="InterPro"/>
</dbReference>
<dbReference type="CDD" id="cd03214">
    <property type="entry name" value="ABC_Iron-Siderophores_B12_Hemin"/>
    <property type="match status" value="1"/>
</dbReference>
<dbReference type="FunFam" id="3.40.50.300:FF:000134">
    <property type="entry name" value="Iron-enterobactin ABC transporter ATP-binding protein"/>
    <property type="match status" value="1"/>
</dbReference>
<dbReference type="Gene3D" id="3.40.50.300">
    <property type="entry name" value="P-loop containing nucleotide triphosphate hydrolases"/>
    <property type="match status" value="1"/>
</dbReference>
<dbReference type="InterPro" id="IPR003593">
    <property type="entry name" value="AAA+_ATPase"/>
</dbReference>
<dbReference type="InterPro" id="IPR003439">
    <property type="entry name" value="ABC_transporter-like_ATP-bd"/>
</dbReference>
<dbReference type="InterPro" id="IPR027417">
    <property type="entry name" value="P-loop_NTPase"/>
</dbReference>
<dbReference type="NCBIfam" id="NF010068">
    <property type="entry name" value="PRK13548.1"/>
    <property type="match status" value="1"/>
</dbReference>
<dbReference type="PANTHER" id="PTHR42794">
    <property type="entry name" value="HEMIN IMPORT ATP-BINDING PROTEIN HMUV"/>
    <property type="match status" value="1"/>
</dbReference>
<dbReference type="PANTHER" id="PTHR42794:SF1">
    <property type="entry name" value="HEMIN IMPORT ATP-BINDING PROTEIN HMUV"/>
    <property type="match status" value="1"/>
</dbReference>
<dbReference type="Pfam" id="PF00005">
    <property type="entry name" value="ABC_tran"/>
    <property type="match status" value="1"/>
</dbReference>
<dbReference type="SMART" id="SM00382">
    <property type="entry name" value="AAA"/>
    <property type="match status" value="1"/>
</dbReference>
<dbReference type="SUPFAM" id="SSF52540">
    <property type="entry name" value="P-loop containing nucleoside triphosphate hydrolases"/>
    <property type="match status" value="1"/>
</dbReference>
<dbReference type="PROSITE" id="PS50893">
    <property type="entry name" value="ABC_TRANSPORTER_2"/>
    <property type="match status" value="1"/>
</dbReference>
<dbReference type="PROSITE" id="PS51261">
    <property type="entry name" value="HMUV"/>
    <property type="match status" value="1"/>
</dbReference>
<comment type="function">
    <text evidence="1">Part of the ABC transporter complex HmuTUV involved in hemin import. Responsible for energy coupling to the transport system.</text>
</comment>
<comment type="subunit">
    <text evidence="1">The complex is composed of two ATP-binding proteins (HmuV), two transmembrane proteins (HmuU) and a solute-binding protein (HmuT).</text>
</comment>
<comment type="subcellular location">
    <subcellularLocation>
        <location evidence="1">Cell inner membrane</location>
        <topology evidence="1">Peripheral membrane protein</topology>
    </subcellularLocation>
</comment>
<comment type="similarity">
    <text evidence="1">Belongs to the ABC transporter superfamily. Heme (hemin) importer (TC 3.A.1.14.5) family.</text>
</comment>